<organism>
    <name type="scientific">Salmonella paratyphi A (strain AKU_12601)</name>
    <dbReference type="NCBI Taxonomy" id="554290"/>
    <lineage>
        <taxon>Bacteria</taxon>
        <taxon>Pseudomonadati</taxon>
        <taxon>Pseudomonadota</taxon>
        <taxon>Gammaproteobacteria</taxon>
        <taxon>Enterobacterales</taxon>
        <taxon>Enterobacteriaceae</taxon>
        <taxon>Salmonella</taxon>
    </lineage>
</organism>
<gene>
    <name evidence="1" type="primary">metE</name>
    <name type="ordered locus">SSPA3544</name>
</gene>
<accession>B5BIX4</accession>
<proteinExistence type="inferred from homology"/>
<sequence>MTILTHTLGFPRVGLRRELKKAQESYWAGNSTREALLAVGRELRARHWEQQKQAGIDLLPVGDFAWYDHVLTTSLLLGNVPARHQNNDGSVDIDTLFRIGRGRAPTGEPAAAAEMTKWFNTNYHYIVPEFSKGQQFRLTWTQLLEEVDEALALGHKIKPVLLGPVTYLWLGKVKGEPFDRLTLLKDILPVYQHVLAELAKRGIEWVQIDELALVLELPQAWLDAFKPAYDALAGQVKLLLTTYFEGVTPNLDTIIALPAQGLHVDLIHGKDDVAELHQRLPVDWLLSAGLINGRNVWRADLTEKYAQINALVGKRALWVASSCSLLHSPIDLSVETRLDTEVKSWFAFALQKCGELALLRDALNSGETAALEEWSAPIQARRHSRRVHNAAVEKRLAAITAQDSQRENPYEVRAEAQRARFKLPAWPTTTIGSFPQTTEIRGLRLDFKKGNLDANNYRTGIAEHIKQAIIEQERLGLDVLVHGEAERNDMVEYFGEHLDGFVFTQNGWVQSYGSRCVKPPVVIGDISRPAPITVEWAKYAQSLTDKPVKGMLTGPVTILCWSFPREDVTRETIAKQIALALRDEVADLEAAGIGIIQIDEPALREGLPLRRSDWDAYLEWGVEAFRINAAVAKDETQIHTHMCYCEFNDIMDSIVALDADVITIETSRSDMELLESFEAFDYPNEIGPGVYDIHSPNVPSVEWIEALLKKAAQRIPAQRLWVNPDCGLKTRGWPETRAALANMVKAAHNLRQAK</sequence>
<comment type="function">
    <text evidence="1">Catalyzes the transfer of a methyl group from 5-methyltetrahydrofolate to homocysteine resulting in methionine formation.</text>
</comment>
<comment type="catalytic activity">
    <reaction evidence="1">
        <text>5-methyltetrahydropteroyltri-L-glutamate + L-homocysteine = tetrahydropteroyltri-L-glutamate + L-methionine</text>
        <dbReference type="Rhea" id="RHEA:21196"/>
        <dbReference type="ChEBI" id="CHEBI:57844"/>
        <dbReference type="ChEBI" id="CHEBI:58140"/>
        <dbReference type="ChEBI" id="CHEBI:58199"/>
        <dbReference type="ChEBI" id="CHEBI:58207"/>
        <dbReference type="EC" id="2.1.1.14"/>
    </reaction>
</comment>
<comment type="cofactor">
    <cofactor evidence="1">
        <name>Zn(2+)</name>
        <dbReference type="ChEBI" id="CHEBI:29105"/>
    </cofactor>
    <text evidence="1">Binds 1 zinc ion per subunit.</text>
</comment>
<comment type="pathway">
    <text evidence="1">Amino-acid biosynthesis; L-methionine biosynthesis via de novo pathway; L-methionine from L-homocysteine (MetE route): step 1/1.</text>
</comment>
<comment type="similarity">
    <text evidence="1">Belongs to the vitamin-B12 independent methionine synthase family.</text>
</comment>
<protein>
    <recommendedName>
        <fullName evidence="1">5-methyltetrahydropteroyltriglutamate--homocysteine methyltransferase</fullName>
        <ecNumber evidence="1">2.1.1.14</ecNumber>
    </recommendedName>
    <alternativeName>
        <fullName evidence="1">Cobalamin-independent methionine synthase</fullName>
    </alternativeName>
    <alternativeName>
        <fullName evidence="1">Methionine synthase, vitamin-B12 independent isozyme</fullName>
    </alternativeName>
</protein>
<keyword id="KW-0028">Amino-acid biosynthesis</keyword>
<keyword id="KW-0479">Metal-binding</keyword>
<keyword id="KW-0486">Methionine biosynthesis</keyword>
<keyword id="KW-0489">Methyltransferase</keyword>
<keyword id="KW-0677">Repeat</keyword>
<keyword id="KW-0808">Transferase</keyword>
<keyword id="KW-0862">Zinc</keyword>
<dbReference type="EC" id="2.1.1.14" evidence="1"/>
<dbReference type="EMBL" id="FM200053">
    <property type="protein sequence ID" value="CAR61823.1"/>
    <property type="molecule type" value="Genomic_DNA"/>
</dbReference>
<dbReference type="RefSeq" id="WP_000154177.1">
    <property type="nucleotide sequence ID" value="NC_011147.1"/>
</dbReference>
<dbReference type="SMR" id="B5BIX4"/>
<dbReference type="KEGG" id="sek:SSPA3544"/>
<dbReference type="HOGENOM" id="CLU_013175_0_0_6"/>
<dbReference type="UniPathway" id="UPA00051">
    <property type="reaction ID" value="UER00082"/>
</dbReference>
<dbReference type="Proteomes" id="UP000001869">
    <property type="component" value="Chromosome"/>
</dbReference>
<dbReference type="GO" id="GO:0003871">
    <property type="term" value="F:5-methyltetrahydropteroyltriglutamate-homocysteine S-methyltransferase activity"/>
    <property type="evidence" value="ECO:0007669"/>
    <property type="project" value="UniProtKB-UniRule"/>
</dbReference>
<dbReference type="GO" id="GO:0008270">
    <property type="term" value="F:zinc ion binding"/>
    <property type="evidence" value="ECO:0007669"/>
    <property type="project" value="InterPro"/>
</dbReference>
<dbReference type="GO" id="GO:0009086">
    <property type="term" value="P:methionine biosynthetic process"/>
    <property type="evidence" value="ECO:0007669"/>
    <property type="project" value="UniProtKB-UniRule"/>
</dbReference>
<dbReference type="GO" id="GO:0032259">
    <property type="term" value="P:methylation"/>
    <property type="evidence" value="ECO:0007669"/>
    <property type="project" value="UniProtKB-KW"/>
</dbReference>
<dbReference type="CDD" id="cd03311">
    <property type="entry name" value="CIMS_C_terminal_like"/>
    <property type="match status" value="1"/>
</dbReference>
<dbReference type="CDD" id="cd03312">
    <property type="entry name" value="CIMS_N_terminal_like"/>
    <property type="match status" value="1"/>
</dbReference>
<dbReference type="FunFam" id="3.20.20.210:FF:000002">
    <property type="entry name" value="5-methyltetrahydropteroyltriglutamate--homocysteine methyltransferase"/>
    <property type="match status" value="1"/>
</dbReference>
<dbReference type="FunFam" id="3.20.20.210:FF:000003">
    <property type="entry name" value="5-methyltetrahydropteroyltriglutamate--homocysteine methyltransferase"/>
    <property type="match status" value="1"/>
</dbReference>
<dbReference type="Gene3D" id="3.20.20.210">
    <property type="match status" value="2"/>
</dbReference>
<dbReference type="HAMAP" id="MF_00172">
    <property type="entry name" value="Meth_synth"/>
    <property type="match status" value="1"/>
</dbReference>
<dbReference type="InterPro" id="IPR013215">
    <property type="entry name" value="Cbl-indep_Met_Synth_N"/>
</dbReference>
<dbReference type="InterPro" id="IPR006276">
    <property type="entry name" value="Cobalamin-indep_Met_synthase"/>
</dbReference>
<dbReference type="InterPro" id="IPR002629">
    <property type="entry name" value="Met_Synth_C/arc"/>
</dbReference>
<dbReference type="InterPro" id="IPR038071">
    <property type="entry name" value="UROD/MetE-like_sf"/>
</dbReference>
<dbReference type="NCBIfam" id="TIGR01371">
    <property type="entry name" value="met_syn_B12ind"/>
    <property type="match status" value="1"/>
</dbReference>
<dbReference type="NCBIfam" id="NF003556">
    <property type="entry name" value="PRK05222.1"/>
    <property type="match status" value="1"/>
</dbReference>
<dbReference type="PANTHER" id="PTHR30519">
    <property type="entry name" value="5-METHYLTETRAHYDROPTEROYLTRIGLUTAMATE--HOMOCYSTEINE METHYLTRANSFERASE"/>
    <property type="match status" value="1"/>
</dbReference>
<dbReference type="Pfam" id="PF08267">
    <property type="entry name" value="Meth_synt_1"/>
    <property type="match status" value="1"/>
</dbReference>
<dbReference type="Pfam" id="PF01717">
    <property type="entry name" value="Meth_synt_2"/>
    <property type="match status" value="1"/>
</dbReference>
<dbReference type="PIRSF" id="PIRSF000382">
    <property type="entry name" value="MeTrfase_B12_ind"/>
    <property type="match status" value="1"/>
</dbReference>
<dbReference type="SUPFAM" id="SSF51726">
    <property type="entry name" value="UROD/MetE-like"/>
    <property type="match status" value="2"/>
</dbReference>
<name>METE_SALPK</name>
<reference key="1">
    <citation type="journal article" date="2009" name="BMC Genomics">
        <title>Pseudogene accumulation in the evolutionary histories of Salmonella enterica serovars Paratyphi A and Typhi.</title>
        <authorList>
            <person name="Holt K.E."/>
            <person name="Thomson N.R."/>
            <person name="Wain J."/>
            <person name="Langridge G.C."/>
            <person name="Hasan R."/>
            <person name="Bhutta Z.A."/>
            <person name="Quail M.A."/>
            <person name="Norbertczak H."/>
            <person name="Walker D."/>
            <person name="Simmonds M."/>
            <person name="White B."/>
            <person name="Bason N."/>
            <person name="Mungall K."/>
            <person name="Dougan G."/>
            <person name="Parkhill J."/>
        </authorList>
    </citation>
    <scope>NUCLEOTIDE SEQUENCE [LARGE SCALE GENOMIC DNA]</scope>
    <source>
        <strain>AKU_12601</strain>
    </source>
</reference>
<feature type="chain" id="PRO_1000097843" description="5-methyltetrahydropteroyltriglutamate--homocysteine methyltransferase">
    <location>
        <begin position="1"/>
        <end position="754"/>
    </location>
</feature>
<feature type="active site" description="Proton donor" evidence="1">
    <location>
        <position position="694"/>
    </location>
</feature>
<feature type="binding site" evidence="1">
    <location>
        <begin position="17"/>
        <end position="20"/>
    </location>
    <ligand>
        <name>5-methyltetrahydropteroyltri-L-glutamate</name>
        <dbReference type="ChEBI" id="CHEBI:58207"/>
    </ligand>
</feature>
<feature type="binding site" evidence="1">
    <location>
        <position position="117"/>
    </location>
    <ligand>
        <name>5-methyltetrahydropteroyltri-L-glutamate</name>
        <dbReference type="ChEBI" id="CHEBI:58207"/>
    </ligand>
</feature>
<feature type="binding site" evidence="1">
    <location>
        <begin position="431"/>
        <end position="433"/>
    </location>
    <ligand>
        <name>L-homocysteine</name>
        <dbReference type="ChEBI" id="CHEBI:58199"/>
    </ligand>
</feature>
<feature type="binding site" evidence="1">
    <location>
        <begin position="431"/>
        <end position="433"/>
    </location>
    <ligand>
        <name>L-methionine</name>
        <dbReference type="ChEBI" id="CHEBI:57844"/>
    </ligand>
</feature>
<feature type="binding site" evidence="1">
    <location>
        <position position="484"/>
    </location>
    <ligand>
        <name>L-homocysteine</name>
        <dbReference type="ChEBI" id="CHEBI:58199"/>
    </ligand>
</feature>
<feature type="binding site" evidence="1">
    <location>
        <position position="484"/>
    </location>
    <ligand>
        <name>L-methionine</name>
        <dbReference type="ChEBI" id="CHEBI:57844"/>
    </ligand>
</feature>
<feature type="binding site" evidence="1">
    <location>
        <begin position="515"/>
        <end position="516"/>
    </location>
    <ligand>
        <name>5-methyltetrahydropteroyltri-L-glutamate</name>
        <dbReference type="ChEBI" id="CHEBI:58207"/>
    </ligand>
</feature>
<feature type="binding site" evidence="1">
    <location>
        <position position="561"/>
    </location>
    <ligand>
        <name>5-methyltetrahydropteroyltri-L-glutamate</name>
        <dbReference type="ChEBI" id="CHEBI:58207"/>
    </ligand>
</feature>
<feature type="binding site" evidence="1">
    <location>
        <position position="599"/>
    </location>
    <ligand>
        <name>L-homocysteine</name>
        <dbReference type="ChEBI" id="CHEBI:58199"/>
    </ligand>
</feature>
<feature type="binding site" evidence="1">
    <location>
        <position position="599"/>
    </location>
    <ligand>
        <name>L-methionine</name>
        <dbReference type="ChEBI" id="CHEBI:57844"/>
    </ligand>
</feature>
<feature type="binding site" evidence="1">
    <location>
        <position position="605"/>
    </location>
    <ligand>
        <name>5-methyltetrahydropteroyltri-L-glutamate</name>
        <dbReference type="ChEBI" id="CHEBI:58207"/>
    </ligand>
</feature>
<feature type="binding site" evidence="1">
    <location>
        <position position="641"/>
    </location>
    <ligand>
        <name>Zn(2+)</name>
        <dbReference type="ChEBI" id="CHEBI:29105"/>
        <note>catalytic</note>
    </ligand>
</feature>
<feature type="binding site" evidence="1">
    <location>
        <position position="643"/>
    </location>
    <ligand>
        <name>Zn(2+)</name>
        <dbReference type="ChEBI" id="CHEBI:29105"/>
        <note>catalytic</note>
    </ligand>
</feature>
<feature type="binding site" evidence="1">
    <location>
        <position position="665"/>
    </location>
    <ligand>
        <name>Zn(2+)</name>
        <dbReference type="ChEBI" id="CHEBI:29105"/>
        <note>catalytic</note>
    </ligand>
</feature>
<feature type="binding site" evidence="1">
    <location>
        <position position="726"/>
    </location>
    <ligand>
        <name>Zn(2+)</name>
        <dbReference type="ChEBI" id="CHEBI:29105"/>
        <note>catalytic</note>
    </ligand>
</feature>
<evidence type="ECO:0000255" key="1">
    <source>
        <dbReference type="HAMAP-Rule" id="MF_00172"/>
    </source>
</evidence>